<evidence type="ECO:0000255" key="1">
    <source>
        <dbReference type="HAMAP-Rule" id="MF_01813"/>
    </source>
</evidence>
<name>UBIE_SHESR</name>
<feature type="chain" id="PRO_1000056301" description="Ubiquinone/menaquinone biosynthesis C-methyltransferase UbiE">
    <location>
        <begin position="1"/>
        <end position="251"/>
    </location>
</feature>
<feature type="binding site" evidence="1">
    <location>
        <position position="74"/>
    </location>
    <ligand>
        <name>S-adenosyl-L-methionine</name>
        <dbReference type="ChEBI" id="CHEBI:59789"/>
    </ligand>
</feature>
<feature type="binding site" evidence="1">
    <location>
        <position position="95"/>
    </location>
    <ligand>
        <name>S-adenosyl-L-methionine</name>
        <dbReference type="ChEBI" id="CHEBI:59789"/>
    </ligand>
</feature>
<feature type="binding site" evidence="1">
    <location>
        <begin position="123"/>
        <end position="124"/>
    </location>
    <ligand>
        <name>S-adenosyl-L-methionine</name>
        <dbReference type="ChEBI" id="CHEBI:59789"/>
    </ligand>
</feature>
<comment type="function">
    <text evidence="1">Methyltransferase required for the conversion of demethylmenaquinol (DMKH2) to menaquinol (MKH2) and the conversion of 2-polyprenyl-6-methoxy-1,4-benzoquinol (DDMQH2) to 2-polyprenyl-3-methyl-6-methoxy-1,4-benzoquinol (DMQH2).</text>
</comment>
<comment type="catalytic activity">
    <reaction evidence="1">
        <text>a 2-demethylmenaquinol + S-adenosyl-L-methionine = a menaquinol + S-adenosyl-L-homocysteine + H(+)</text>
        <dbReference type="Rhea" id="RHEA:42640"/>
        <dbReference type="Rhea" id="RHEA-COMP:9539"/>
        <dbReference type="Rhea" id="RHEA-COMP:9563"/>
        <dbReference type="ChEBI" id="CHEBI:15378"/>
        <dbReference type="ChEBI" id="CHEBI:18151"/>
        <dbReference type="ChEBI" id="CHEBI:55437"/>
        <dbReference type="ChEBI" id="CHEBI:57856"/>
        <dbReference type="ChEBI" id="CHEBI:59789"/>
        <dbReference type="EC" id="2.1.1.163"/>
    </reaction>
</comment>
<comment type="catalytic activity">
    <reaction evidence="1">
        <text>a 2-methoxy-6-(all-trans-polyprenyl)benzene-1,4-diol + S-adenosyl-L-methionine = a 5-methoxy-2-methyl-3-(all-trans-polyprenyl)benzene-1,4-diol + S-adenosyl-L-homocysteine + H(+)</text>
        <dbReference type="Rhea" id="RHEA:28286"/>
        <dbReference type="Rhea" id="RHEA-COMP:10858"/>
        <dbReference type="Rhea" id="RHEA-COMP:10859"/>
        <dbReference type="ChEBI" id="CHEBI:15378"/>
        <dbReference type="ChEBI" id="CHEBI:57856"/>
        <dbReference type="ChEBI" id="CHEBI:59789"/>
        <dbReference type="ChEBI" id="CHEBI:84166"/>
        <dbReference type="ChEBI" id="CHEBI:84167"/>
        <dbReference type="EC" id="2.1.1.201"/>
    </reaction>
</comment>
<comment type="pathway">
    <text evidence="1">Quinol/quinone metabolism; menaquinone biosynthesis; menaquinol from 1,4-dihydroxy-2-naphthoate: step 2/2.</text>
</comment>
<comment type="pathway">
    <text evidence="1">Cofactor biosynthesis; ubiquinone biosynthesis.</text>
</comment>
<comment type="similarity">
    <text evidence="1">Belongs to the class I-like SAM-binding methyltransferase superfamily. MenG/UbiE family.</text>
</comment>
<sequence>MSEGESKNTHFGYKTVEADKKADLVAGVFHSVAAKYDIMNDVMSFGIHRFWKRYTIEVSGARPGMKVLDLAGGTGDLTAKFSHLVGEKGEVVLADINDSMLKVGRTKLRDRGIVGNVSYVQANAEALPFPDNHFDIITIAFGLRNVTDKDAALRSMNRVLKPGGKLLVLEFSKPQHELMRKVYDLYSFKVLPKMGEIITKDADSYEYLAESIRMHPDQETLKQMMVDAGFEQVDYTNMTDGIVALHRGYKF</sequence>
<keyword id="KW-0474">Menaquinone biosynthesis</keyword>
<keyword id="KW-0489">Methyltransferase</keyword>
<keyword id="KW-0949">S-adenosyl-L-methionine</keyword>
<keyword id="KW-0808">Transferase</keyword>
<keyword id="KW-0831">Ubiquinone biosynthesis</keyword>
<protein>
    <recommendedName>
        <fullName evidence="1">Ubiquinone/menaquinone biosynthesis C-methyltransferase UbiE</fullName>
        <ecNumber evidence="1">2.1.1.163</ecNumber>
        <ecNumber evidence="1">2.1.1.201</ecNumber>
    </recommendedName>
    <alternativeName>
        <fullName evidence="1">2-methoxy-6-polyprenyl-1,4-benzoquinol methylase</fullName>
    </alternativeName>
    <alternativeName>
        <fullName evidence="1">Demethylmenaquinone methyltransferase</fullName>
    </alternativeName>
</protein>
<organism>
    <name type="scientific">Shewanella sp. (strain MR-7)</name>
    <dbReference type="NCBI Taxonomy" id="60481"/>
    <lineage>
        <taxon>Bacteria</taxon>
        <taxon>Pseudomonadati</taxon>
        <taxon>Pseudomonadota</taxon>
        <taxon>Gammaproteobacteria</taxon>
        <taxon>Alteromonadales</taxon>
        <taxon>Shewanellaceae</taxon>
        <taxon>Shewanella</taxon>
    </lineage>
</organism>
<proteinExistence type="inferred from homology"/>
<accession>Q0HZP7</accession>
<reference key="1">
    <citation type="submission" date="2006-08" db="EMBL/GenBank/DDBJ databases">
        <title>Complete sequence of chromosome 1 of Shewanella sp. MR-7.</title>
        <authorList>
            <person name="Copeland A."/>
            <person name="Lucas S."/>
            <person name="Lapidus A."/>
            <person name="Barry K."/>
            <person name="Detter J.C."/>
            <person name="Glavina del Rio T."/>
            <person name="Hammon N."/>
            <person name="Israni S."/>
            <person name="Dalin E."/>
            <person name="Tice H."/>
            <person name="Pitluck S."/>
            <person name="Kiss H."/>
            <person name="Brettin T."/>
            <person name="Bruce D."/>
            <person name="Han C."/>
            <person name="Tapia R."/>
            <person name="Gilna P."/>
            <person name="Schmutz J."/>
            <person name="Larimer F."/>
            <person name="Land M."/>
            <person name="Hauser L."/>
            <person name="Kyrpides N."/>
            <person name="Mikhailova N."/>
            <person name="Nealson K."/>
            <person name="Konstantinidis K."/>
            <person name="Klappenbach J."/>
            <person name="Tiedje J."/>
            <person name="Richardson P."/>
        </authorList>
    </citation>
    <scope>NUCLEOTIDE SEQUENCE [LARGE SCALE GENOMIC DNA]</scope>
    <source>
        <strain>MR-7</strain>
    </source>
</reference>
<gene>
    <name evidence="1" type="primary">ubiE</name>
    <name type="ordered locus">Shewmr7_0405</name>
</gene>
<dbReference type="EC" id="2.1.1.163" evidence="1"/>
<dbReference type="EC" id="2.1.1.201" evidence="1"/>
<dbReference type="EMBL" id="CP000444">
    <property type="protein sequence ID" value="ABI41408.1"/>
    <property type="molecule type" value="Genomic_DNA"/>
</dbReference>
<dbReference type="SMR" id="Q0HZP7"/>
<dbReference type="KEGG" id="shm:Shewmr7_0405"/>
<dbReference type="HOGENOM" id="CLU_037990_0_0_6"/>
<dbReference type="UniPathway" id="UPA00079">
    <property type="reaction ID" value="UER00169"/>
</dbReference>
<dbReference type="UniPathway" id="UPA00232"/>
<dbReference type="GO" id="GO:0008425">
    <property type="term" value="F:2-methoxy-6-polyprenyl-1,4-benzoquinol methyltransferase activity"/>
    <property type="evidence" value="ECO:0007669"/>
    <property type="project" value="UniProtKB-UniRule"/>
</dbReference>
<dbReference type="GO" id="GO:0043770">
    <property type="term" value="F:demethylmenaquinone methyltransferase activity"/>
    <property type="evidence" value="ECO:0007669"/>
    <property type="project" value="UniProtKB-UniRule"/>
</dbReference>
<dbReference type="GO" id="GO:0009060">
    <property type="term" value="P:aerobic respiration"/>
    <property type="evidence" value="ECO:0007669"/>
    <property type="project" value="UniProtKB-UniRule"/>
</dbReference>
<dbReference type="GO" id="GO:0009234">
    <property type="term" value="P:menaquinone biosynthetic process"/>
    <property type="evidence" value="ECO:0007669"/>
    <property type="project" value="UniProtKB-UniRule"/>
</dbReference>
<dbReference type="GO" id="GO:0032259">
    <property type="term" value="P:methylation"/>
    <property type="evidence" value="ECO:0007669"/>
    <property type="project" value="UniProtKB-KW"/>
</dbReference>
<dbReference type="CDD" id="cd02440">
    <property type="entry name" value="AdoMet_MTases"/>
    <property type="match status" value="1"/>
</dbReference>
<dbReference type="FunFam" id="3.40.50.150:FF:000014">
    <property type="entry name" value="Ubiquinone/menaquinone biosynthesis C-methyltransferase UbiE"/>
    <property type="match status" value="1"/>
</dbReference>
<dbReference type="Gene3D" id="3.40.50.150">
    <property type="entry name" value="Vaccinia Virus protein VP39"/>
    <property type="match status" value="1"/>
</dbReference>
<dbReference type="HAMAP" id="MF_01813">
    <property type="entry name" value="MenG_UbiE_methyltr"/>
    <property type="match status" value="1"/>
</dbReference>
<dbReference type="InterPro" id="IPR029063">
    <property type="entry name" value="SAM-dependent_MTases_sf"/>
</dbReference>
<dbReference type="InterPro" id="IPR004033">
    <property type="entry name" value="UbiE/COQ5_MeTrFase"/>
</dbReference>
<dbReference type="InterPro" id="IPR023576">
    <property type="entry name" value="UbiE/COQ5_MeTrFase_CS"/>
</dbReference>
<dbReference type="NCBIfam" id="TIGR01934">
    <property type="entry name" value="MenG_MenH_UbiE"/>
    <property type="match status" value="1"/>
</dbReference>
<dbReference type="NCBIfam" id="NF001240">
    <property type="entry name" value="PRK00216.1-1"/>
    <property type="match status" value="1"/>
</dbReference>
<dbReference type="NCBIfam" id="NF001242">
    <property type="entry name" value="PRK00216.1-3"/>
    <property type="match status" value="1"/>
</dbReference>
<dbReference type="NCBIfam" id="NF001244">
    <property type="entry name" value="PRK00216.1-5"/>
    <property type="match status" value="1"/>
</dbReference>
<dbReference type="PANTHER" id="PTHR43591:SF24">
    <property type="entry name" value="2-METHOXY-6-POLYPRENYL-1,4-BENZOQUINOL METHYLASE, MITOCHONDRIAL"/>
    <property type="match status" value="1"/>
</dbReference>
<dbReference type="PANTHER" id="PTHR43591">
    <property type="entry name" value="METHYLTRANSFERASE"/>
    <property type="match status" value="1"/>
</dbReference>
<dbReference type="Pfam" id="PF01209">
    <property type="entry name" value="Ubie_methyltran"/>
    <property type="match status" value="1"/>
</dbReference>
<dbReference type="SUPFAM" id="SSF53335">
    <property type="entry name" value="S-adenosyl-L-methionine-dependent methyltransferases"/>
    <property type="match status" value="1"/>
</dbReference>
<dbReference type="PROSITE" id="PS51608">
    <property type="entry name" value="SAM_MT_UBIE"/>
    <property type="match status" value="1"/>
</dbReference>
<dbReference type="PROSITE" id="PS01183">
    <property type="entry name" value="UBIE_1"/>
    <property type="match status" value="1"/>
</dbReference>
<dbReference type="PROSITE" id="PS01184">
    <property type="entry name" value="UBIE_2"/>
    <property type="match status" value="1"/>
</dbReference>